<gene>
    <name evidence="2" type="primary">tuf2</name>
    <name type="ordered locus">Caul_1607</name>
</gene>
<protein>
    <recommendedName>
        <fullName evidence="2">Elongation factor Tu 2</fullName>
        <shortName evidence="2">EF-Tu 2</shortName>
        <ecNumber evidence="2">3.6.5.3</ecNumber>
    </recommendedName>
</protein>
<evidence type="ECO:0000250" key="1"/>
<evidence type="ECO:0000255" key="2">
    <source>
        <dbReference type="HAMAP-Rule" id="MF_00118"/>
    </source>
</evidence>
<feature type="chain" id="PRO_0000337352" description="Elongation factor Tu 2">
    <location>
        <begin position="1"/>
        <end position="396"/>
    </location>
</feature>
<feature type="domain" description="tr-type G">
    <location>
        <begin position="10"/>
        <end position="206"/>
    </location>
</feature>
<feature type="region of interest" description="G1" evidence="1">
    <location>
        <begin position="19"/>
        <end position="26"/>
    </location>
</feature>
<feature type="region of interest" description="G2" evidence="1">
    <location>
        <begin position="60"/>
        <end position="64"/>
    </location>
</feature>
<feature type="region of interest" description="G3" evidence="1">
    <location>
        <begin position="81"/>
        <end position="84"/>
    </location>
</feature>
<feature type="region of interest" description="G4" evidence="1">
    <location>
        <begin position="136"/>
        <end position="139"/>
    </location>
</feature>
<feature type="region of interest" description="G5" evidence="1">
    <location>
        <begin position="174"/>
        <end position="176"/>
    </location>
</feature>
<feature type="binding site" evidence="2">
    <location>
        <begin position="19"/>
        <end position="26"/>
    </location>
    <ligand>
        <name>GTP</name>
        <dbReference type="ChEBI" id="CHEBI:37565"/>
    </ligand>
</feature>
<feature type="binding site" evidence="2">
    <location>
        <position position="26"/>
    </location>
    <ligand>
        <name>Mg(2+)</name>
        <dbReference type="ChEBI" id="CHEBI:18420"/>
    </ligand>
</feature>
<feature type="binding site" evidence="2">
    <location>
        <begin position="81"/>
        <end position="85"/>
    </location>
    <ligand>
        <name>GTP</name>
        <dbReference type="ChEBI" id="CHEBI:37565"/>
    </ligand>
</feature>
<feature type="binding site" evidence="2">
    <location>
        <begin position="136"/>
        <end position="139"/>
    </location>
    <ligand>
        <name>GTP</name>
        <dbReference type="ChEBI" id="CHEBI:37565"/>
    </ligand>
</feature>
<keyword id="KW-0963">Cytoplasm</keyword>
<keyword id="KW-0251">Elongation factor</keyword>
<keyword id="KW-0342">GTP-binding</keyword>
<keyword id="KW-0378">Hydrolase</keyword>
<keyword id="KW-0460">Magnesium</keyword>
<keyword id="KW-0479">Metal-binding</keyword>
<keyword id="KW-0547">Nucleotide-binding</keyword>
<keyword id="KW-0648">Protein biosynthesis</keyword>
<sequence>MAKEKFERNKPHCNIGTIGHVDHGKTTLTAAITIILAKSGGATAKNYADIDAAPEEKARGITINTAHVEYETANRHYAHVDCPGHADYVKNMITGAAQMDGAILVVSAADGPMPQTREHILLARQVGVPALVVYMNKVDLVDDEELLELVEMEVRELLSSYDFPGDDIPITKGSAKVAIDGGDPVIGEQSILALMTTVDAYIPQPDRPIDLPFLMPVEDVFSISGRGTVVTGRIEKGVVKVGEEVEIVGIRAVQKTTCTGVEMFRKLLDQGQAGDNVGVLLRGTKREDVERGQVLCKPGSITPHTKFVAEAYILTKEEGGRHTPFFTNYRPQFYFRTTDVTGIIKLREGVEMIMPGDNAELDVELITPIAMDQGLRFAIREGGRTVGAGVVAKIVE</sequence>
<reference key="1">
    <citation type="submission" date="2008-01" db="EMBL/GenBank/DDBJ databases">
        <title>Complete sequence of chromosome of Caulobacter sp. K31.</title>
        <authorList>
            <consortium name="US DOE Joint Genome Institute"/>
            <person name="Copeland A."/>
            <person name="Lucas S."/>
            <person name="Lapidus A."/>
            <person name="Barry K."/>
            <person name="Glavina del Rio T."/>
            <person name="Dalin E."/>
            <person name="Tice H."/>
            <person name="Pitluck S."/>
            <person name="Bruce D."/>
            <person name="Goodwin L."/>
            <person name="Thompson L.S."/>
            <person name="Brettin T."/>
            <person name="Detter J.C."/>
            <person name="Han C."/>
            <person name="Schmutz J."/>
            <person name="Larimer F."/>
            <person name="Land M."/>
            <person name="Hauser L."/>
            <person name="Kyrpides N."/>
            <person name="Kim E."/>
            <person name="Stephens C."/>
            <person name="Richardson P."/>
        </authorList>
    </citation>
    <scope>NUCLEOTIDE SEQUENCE [LARGE SCALE GENOMIC DNA]</scope>
    <source>
        <strain>K31</strain>
    </source>
</reference>
<accession>B0T2B5</accession>
<organism>
    <name type="scientific">Caulobacter sp. (strain K31)</name>
    <dbReference type="NCBI Taxonomy" id="366602"/>
    <lineage>
        <taxon>Bacteria</taxon>
        <taxon>Pseudomonadati</taxon>
        <taxon>Pseudomonadota</taxon>
        <taxon>Alphaproteobacteria</taxon>
        <taxon>Caulobacterales</taxon>
        <taxon>Caulobacteraceae</taxon>
        <taxon>Caulobacter</taxon>
    </lineage>
</organism>
<proteinExistence type="inferred from homology"/>
<name>EFTU2_CAUSK</name>
<comment type="function">
    <text evidence="2">GTP hydrolase that promotes the GTP-dependent binding of aminoacyl-tRNA to the A-site of ribosomes during protein biosynthesis.</text>
</comment>
<comment type="catalytic activity">
    <reaction evidence="2">
        <text>GTP + H2O = GDP + phosphate + H(+)</text>
        <dbReference type="Rhea" id="RHEA:19669"/>
        <dbReference type="ChEBI" id="CHEBI:15377"/>
        <dbReference type="ChEBI" id="CHEBI:15378"/>
        <dbReference type="ChEBI" id="CHEBI:37565"/>
        <dbReference type="ChEBI" id="CHEBI:43474"/>
        <dbReference type="ChEBI" id="CHEBI:58189"/>
        <dbReference type="EC" id="3.6.5.3"/>
    </reaction>
    <physiologicalReaction direction="left-to-right" evidence="2">
        <dbReference type="Rhea" id="RHEA:19670"/>
    </physiologicalReaction>
</comment>
<comment type="subunit">
    <text evidence="2">Monomer.</text>
</comment>
<comment type="subcellular location">
    <subcellularLocation>
        <location evidence="2">Cytoplasm</location>
    </subcellularLocation>
</comment>
<comment type="similarity">
    <text evidence="2">Belongs to the TRAFAC class translation factor GTPase superfamily. Classic translation factor GTPase family. EF-Tu/EF-1A subfamily.</text>
</comment>
<dbReference type="EC" id="3.6.5.3" evidence="2"/>
<dbReference type="EMBL" id="CP000927">
    <property type="protein sequence ID" value="ABZ70736.1"/>
    <property type="molecule type" value="Genomic_DNA"/>
</dbReference>
<dbReference type="SMR" id="B0T2B5"/>
<dbReference type="STRING" id="366602.Caul_1607"/>
<dbReference type="KEGG" id="cak:Caul_1607"/>
<dbReference type="eggNOG" id="COG0050">
    <property type="taxonomic scope" value="Bacteria"/>
</dbReference>
<dbReference type="HOGENOM" id="CLU_007265_0_1_5"/>
<dbReference type="OrthoDB" id="9803139at2"/>
<dbReference type="GO" id="GO:0005829">
    <property type="term" value="C:cytosol"/>
    <property type="evidence" value="ECO:0007669"/>
    <property type="project" value="TreeGrafter"/>
</dbReference>
<dbReference type="GO" id="GO:0005525">
    <property type="term" value="F:GTP binding"/>
    <property type="evidence" value="ECO:0007669"/>
    <property type="project" value="UniProtKB-UniRule"/>
</dbReference>
<dbReference type="GO" id="GO:0003924">
    <property type="term" value="F:GTPase activity"/>
    <property type="evidence" value="ECO:0007669"/>
    <property type="project" value="InterPro"/>
</dbReference>
<dbReference type="GO" id="GO:0097216">
    <property type="term" value="F:guanosine tetraphosphate binding"/>
    <property type="evidence" value="ECO:0007669"/>
    <property type="project" value="UniProtKB-ARBA"/>
</dbReference>
<dbReference type="GO" id="GO:0003746">
    <property type="term" value="F:translation elongation factor activity"/>
    <property type="evidence" value="ECO:0007669"/>
    <property type="project" value="UniProtKB-UniRule"/>
</dbReference>
<dbReference type="CDD" id="cd01884">
    <property type="entry name" value="EF_Tu"/>
    <property type="match status" value="1"/>
</dbReference>
<dbReference type="CDD" id="cd03697">
    <property type="entry name" value="EFTU_II"/>
    <property type="match status" value="1"/>
</dbReference>
<dbReference type="CDD" id="cd03707">
    <property type="entry name" value="EFTU_III"/>
    <property type="match status" value="1"/>
</dbReference>
<dbReference type="FunFam" id="2.40.30.10:FF:000001">
    <property type="entry name" value="Elongation factor Tu"/>
    <property type="match status" value="1"/>
</dbReference>
<dbReference type="FunFam" id="3.40.50.300:FF:000003">
    <property type="entry name" value="Elongation factor Tu"/>
    <property type="match status" value="1"/>
</dbReference>
<dbReference type="Gene3D" id="3.40.50.300">
    <property type="entry name" value="P-loop containing nucleotide triphosphate hydrolases"/>
    <property type="match status" value="1"/>
</dbReference>
<dbReference type="Gene3D" id="2.40.30.10">
    <property type="entry name" value="Translation factors"/>
    <property type="match status" value="2"/>
</dbReference>
<dbReference type="HAMAP" id="MF_00118_B">
    <property type="entry name" value="EF_Tu_B"/>
    <property type="match status" value="1"/>
</dbReference>
<dbReference type="InterPro" id="IPR041709">
    <property type="entry name" value="EF-Tu_GTP-bd"/>
</dbReference>
<dbReference type="InterPro" id="IPR050055">
    <property type="entry name" value="EF-Tu_GTPase"/>
</dbReference>
<dbReference type="InterPro" id="IPR004161">
    <property type="entry name" value="EFTu-like_2"/>
</dbReference>
<dbReference type="InterPro" id="IPR033720">
    <property type="entry name" value="EFTU_2"/>
</dbReference>
<dbReference type="InterPro" id="IPR031157">
    <property type="entry name" value="G_TR_CS"/>
</dbReference>
<dbReference type="InterPro" id="IPR027417">
    <property type="entry name" value="P-loop_NTPase"/>
</dbReference>
<dbReference type="InterPro" id="IPR005225">
    <property type="entry name" value="Small_GTP-bd"/>
</dbReference>
<dbReference type="InterPro" id="IPR000795">
    <property type="entry name" value="T_Tr_GTP-bd_dom"/>
</dbReference>
<dbReference type="InterPro" id="IPR009000">
    <property type="entry name" value="Transl_B-barrel_sf"/>
</dbReference>
<dbReference type="InterPro" id="IPR009001">
    <property type="entry name" value="Transl_elong_EF1A/Init_IF2_C"/>
</dbReference>
<dbReference type="InterPro" id="IPR004541">
    <property type="entry name" value="Transl_elong_EFTu/EF1A_bac/org"/>
</dbReference>
<dbReference type="InterPro" id="IPR004160">
    <property type="entry name" value="Transl_elong_EFTu/EF1A_C"/>
</dbReference>
<dbReference type="NCBIfam" id="TIGR00485">
    <property type="entry name" value="EF-Tu"/>
    <property type="match status" value="1"/>
</dbReference>
<dbReference type="NCBIfam" id="NF000766">
    <property type="entry name" value="PRK00049.1"/>
    <property type="match status" value="1"/>
</dbReference>
<dbReference type="NCBIfam" id="NF009372">
    <property type="entry name" value="PRK12735.1"/>
    <property type="match status" value="1"/>
</dbReference>
<dbReference type="NCBIfam" id="NF009373">
    <property type="entry name" value="PRK12736.1"/>
    <property type="match status" value="1"/>
</dbReference>
<dbReference type="NCBIfam" id="TIGR00231">
    <property type="entry name" value="small_GTP"/>
    <property type="match status" value="1"/>
</dbReference>
<dbReference type="PANTHER" id="PTHR43721:SF22">
    <property type="entry name" value="ELONGATION FACTOR TU, MITOCHONDRIAL"/>
    <property type="match status" value="1"/>
</dbReference>
<dbReference type="PANTHER" id="PTHR43721">
    <property type="entry name" value="ELONGATION FACTOR TU-RELATED"/>
    <property type="match status" value="1"/>
</dbReference>
<dbReference type="Pfam" id="PF00009">
    <property type="entry name" value="GTP_EFTU"/>
    <property type="match status" value="1"/>
</dbReference>
<dbReference type="Pfam" id="PF03144">
    <property type="entry name" value="GTP_EFTU_D2"/>
    <property type="match status" value="1"/>
</dbReference>
<dbReference type="Pfam" id="PF03143">
    <property type="entry name" value="GTP_EFTU_D3"/>
    <property type="match status" value="1"/>
</dbReference>
<dbReference type="PRINTS" id="PR00315">
    <property type="entry name" value="ELONGATNFCT"/>
</dbReference>
<dbReference type="SUPFAM" id="SSF50465">
    <property type="entry name" value="EF-Tu/eEF-1alpha/eIF2-gamma C-terminal domain"/>
    <property type="match status" value="1"/>
</dbReference>
<dbReference type="SUPFAM" id="SSF52540">
    <property type="entry name" value="P-loop containing nucleoside triphosphate hydrolases"/>
    <property type="match status" value="1"/>
</dbReference>
<dbReference type="SUPFAM" id="SSF50447">
    <property type="entry name" value="Translation proteins"/>
    <property type="match status" value="1"/>
</dbReference>
<dbReference type="PROSITE" id="PS00301">
    <property type="entry name" value="G_TR_1"/>
    <property type="match status" value="1"/>
</dbReference>
<dbReference type="PROSITE" id="PS51722">
    <property type="entry name" value="G_TR_2"/>
    <property type="match status" value="1"/>
</dbReference>